<accession>Q0BNS3</accession>
<keyword id="KW-0687">Ribonucleoprotein</keyword>
<keyword id="KW-0689">Ribosomal protein</keyword>
<keyword id="KW-0694">RNA-binding</keyword>
<keyword id="KW-0699">rRNA-binding</keyword>
<feature type="chain" id="PRO_0000265362" description="Small ribosomal subunit protein uS19">
    <location>
        <begin position="1"/>
        <end position="92"/>
    </location>
</feature>
<proteinExistence type="inferred from homology"/>
<comment type="function">
    <text evidence="1">Protein S19 forms a complex with S13 that binds strongly to the 16S ribosomal RNA.</text>
</comment>
<comment type="similarity">
    <text evidence="1">Belongs to the universal ribosomal protein uS19 family.</text>
</comment>
<evidence type="ECO:0000255" key="1">
    <source>
        <dbReference type="HAMAP-Rule" id="MF_00531"/>
    </source>
</evidence>
<evidence type="ECO:0000305" key="2"/>
<name>RS19_FRATO</name>
<reference key="1">
    <citation type="journal article" date="2006" name="J. Bacteriol.">
        <title>Chromosome rearrangement and diversification of Francisella tularensis revealed by the type B (OSU18) genome sequence.</title>
        <authorList>
            <person name="Petrosino J.F."/>
            <person name="Xiang Q."/>
            <person name="Karpathy S.E."/>
            <person name="Jiang H."/>
            <person name="Yerrapragada S."/>
            <person name="Liu Y."/>
            <person name="Gioia J."/>
            <person name="Hemphill L."/>
            <person name="Gonzalez A."/>
            <person name="Raghavan T.M."/>
            <person name="Uzman A."/>
            <person name="Fox G.E."/>
            <person name="Highlander S."/>
            <person name="Reichard M."/>
            <person name="Morton R.J."/>
            <person name="Clinkenbeard K.D."/>
            <person name="Weinstock G.M."/>
        </authorList>
    </citation>
    <scope>NUCLEOTIDE SEQUENCE [LARGE SCALE GENOMIC DNA]</scope>
    <source>
        <strain>OSU18</strain>
    </source>
</reference>
<gene>
    <name evidence="1" type="primary">rpsS</name>
    <name type="ordered locus">FTH_0235</name>
</gene>
<sequence length="92" mass="10499">MPRSLKKGPFVDHHLLKKVFEAQESNSKKPIKTWSRRSMIVPDMIGLTIAVHNGQQHVPVLMTEEMVGHKLGEFVVTRNYRGHAADKKAKKK</sequence>
<protein>
    <recommendedName>
        <fullName evidence="1">Small ribosomal subunit protein uS19</fullName>
    </recommendedName>
    <alternativeName>
        <fullName evidence="2">30S ribosomal protein S19</fullName>
    </alternativeName>
</protein>
<organism>
    <name type="scientific">Francisella tularensis subsp. holarctica (strain OSU18)</name>
    <dbReference type="NCBI Taxonomy" id="393011"/>
    <lineage>
        <taxon>Bacteria</taxon>
        <taxon>Pseudomonadati</taxon>
        <taxon>Pseudomonadota</taxon>
        <taxon>Gammaproteobacteria</taxon>
        <taxon>Thiotrichales</taxon>
        <taxon>Francisellaceae</taxon>
        <taxon>Francisella</taxon>
    </lineage>
</organism>
<dbReference type="EMBL" id="CP000437">
    <property type="protein sequence ID" value="ABI82261.1"/>
    <property type="molecule type" value="Genomic_DNA"/>
</dbReference>
<dbReference type="RefSeq" id="WP_003027195.1">
    <property type="nucleotide sequence ID" value="NC_017463.1"/>
</dbReference>
<dbReference type="SMR" id="Q0BNS3"/>
<dbReference type="GeneID" id="75264257"/>
<dbReference type="KEGG" id="fth:FTH_0235"/>
<dbReference type="GO" id="GO:0005737">
    <property type="term" value="C:cytoplasm"/>
    <property type="evidence" value="ECO:0007669"/>
    <property type="project" value="UniProtKB-ARBA"/>
</dbReference>
<dbReference type="GO" id="GO:0015935">
    <property type="term" value="C:small ribosomal subunit"/>
    <property type="evidence" value="ECO:0007669"/>
    <property type="project" value="InterPro"/>
</dbReference>
<dbReference type="GO" id="GO:0019843">
    <property type="term" value="F:rRNA binding"/>
    <property type="evidence" value="ECO:0007669"/>
    <property type="project" value="UniProtKB-UniRule"/>
</dbReference>
<dbReference type="GO" id="GO:0003735">
    <property type="term" value="F:structural constituent of ribosome"/>
    <property type="evidence" value="ECO:0007669"/>
    <property type="project" value="InterPro"/>
</dbReference>
<dbReference type="GO" id="GO:0000028">
    <property type="term" value="P:ribosomal small subunit assembly"/>
    <property type="evidence" value="ECO:0007669"/>
    <property type="project" value="TreeGrafter"/>
</dbReference>
<dbReference type="GO" id="GO:0006412">
    <property type="term" value="P:translation"/>
    <property type="evidence" value="ECO:0007669"/>
    <property type="project" value="UniProtKB-UniRule"/>
</dbReference>
<dbReference type="FunFam" id="3.30.860.10:FF:000001">
    <property type="entry name" value="30S ribosomal protein S19"/>
    <property type="match status" value="1"/>
</dbReference>
<dbReference type="Gene3D" id="3.30.860.10">
    <property type="entry name" value="30s Ribosomal Protein S19, Chain A"/>
    <property type="match status" value="1"/>
</dbReference>
<dbReference type="HAMAP" id="MF_00531">
    <property type="entry name" value="Ribosomal_uS19"/>
    <property type="match status" value="1"/>
</dbReference>
<dbReference type="InterPro" id="IPR002222">
    <property type="entry name" value="Ribosomal_uS19"/>
</dbReference>
<dbReference type="InterPro" id="IPR005732">
    <property type="entry name" value="Ribosomal_uS19_bac-type"/>
</dbReference>
<dbReference type="InterPro" id="IPR020934">
    <property type="entry name" value="Ribosomal_uS19_CS"/>
</dbReference>
<dbReference type="InterPro" id="IPR023575">
    <property type="entry name" value="Ribosomal_uS19_SF"/>
</dbReference>
<dbReference type="NCBIfam" id="TIGR01050">
    <property type="entry name" value="rpsS_bact"/>
    <property type="match status" value="1"/>
</dbReference>
<dbReference type="PANTHER" id="PTHR11880">
    <property type="entry name" value="RIBOSOMAL PROTEIN S19P FAMILY MEMBER"/>
    <property type="match status" value="1"/>
</dbReference>
<dbReference type="PANTHER" id="PTHR11880:SF8">
    <property type="entry name" value="SMALL RIBOSOMAL SUBUNIT PROTEIN US19M"/>
    <property type="match status" value="1"/>
</dbReference>
<dbReference type="Pfam" id="PF00203">
    <property type="entry name" value="Ribosomal_S19"/>
    <property type="match status" value="1"/>
</dbReference>
<dbReference type="PIRSF" id="PIRSF002144">
    <property type="entry name" value="Ribosomal_S19"/>
    <property type="match status" value="1"/>
</dbReference>
<dbReference type="PRINTS" id="PR00975">
    <property type="entry name" value="RIBOSOMALS19"/>
</dbReference>
<dbReference type="SUPFAM" id="SSF54570">
    <property type="entry name" value="Ribosomal protein S19"/>
    <property type="match status" value="1"/>
</dbReference>
<dbReference type="PROSITE" id="PS00323">
    <property type="entry name" value="RIBOSOMAL_S19"/>
    <property type="match status" value="1"/>
</dbReference>